<name>RLUC_ECO57</name>
<dbReference type="EC" id="5.4.99.24"/>
<dbReference type="EMBL" id="AE005174">
    <property type="protein sequence ID" value="AAG55832.1"/>
    <property type="molecule type" value="Genomic_DNA"/>
</dbReference>
<dbReference type="EMBL" id="BA000007">
    <property type="protein sequence ID" value="BAB34887.1"/>
    <property type="molecule type" value="Genomic_DNA"/>
</dbReference>
<dbReference type="PIR" id="D85671">
    <property type="entry name" value="D85671"/>
</dbReference>
<dbReference type="PIR" id="H90811">
    <property type="entry name" value="H90811"/>
</dbReference>
<dbReference type="RefSeq" id="NP_309491.1">
    <property type="nucleotide sequence ID" value="NC_002695.1"/>
</dbReference>
<dbReference type="RefSeq" id="WP_000846342.1">
    <property type="nucleotide sequence ID" value="NZ_VOAI01000018.1"/>
</dbReference>
<dbReference type="SMR" id="Q8X8J3"/>
<dbReference type="STRING" id="155864.Z1725"/>
<dbReference type="GeneID" id="913470"/>
<dbReference type="KEGG" id="ece:Z1725"/>
<dbReference type="KEGG" id="ecs:ECs_1464"/>
<dbReference type="PATRIC" id="fig|386585.9.peg.1564"/>
<dbReference type="eggNOG" id="COG0564">
    <property type="taxonomic scope" value="Bacteria"/>
</dbReference>
<dbReference type="HOGENOM" id="CLU_016902_1_1_6"/>
<dbReference type="OMA" id="PKSHVYR"/>
<dbReference type="Proteomes" id="UP000000558">
    <property type="component" value="Chromosome"/>
</dbReference>
<dbReference type="Proteomes" id="UP000002519">
    <property type="component" value="Chromosome"/>
</dbReference>
<dbReference type="GO" id="GO:0160141">
    <property type="term" value="F:23S rRNA pseudouridine(955/2504/2580) synthase activity"/>
    <property type="evidence" value="ECO:0007669"/>
    <property type="project" value="UniProtKB-EC"/>
</dbReference>
<dbReference type="GO" id="GO:0003723">
    <property type="term" value="F:RNA binding"/>
    <property type="evidence" value="ECO:0007669"/>
    <property type="project" value="UniProtKB-KW"/>
</dbReference>
<dbReference type="GO" id="GO:0000455">
    <property type="term" value="P:enzyme-directed rRNA pseudouridine synthesis"/>
    <property type="evidence" value="ECO:0007669"/>
    <property type="project" value="TreeGrafter"/>
</dbReference>
<dbReference type="CDD" id="cd02869">
    <property type="entry name" value="PseudoU_synth_RluA_like"/>
    <property type="match status" value="1"/>
</dbReference>
<dbReference type="CDD" id="cd00165">
    <property type="entry name" value="S4"/>
    <property type="match status" value="1"/>
</dbReference>
<dbReference type="FunFam" id="3.10.290.10:FF:000010">
    <property type="entry name" value="Pseudouridine synthase"/>
    <property type="match status" value="1"/>
</dbReference>
<dbReference type="FunFam" id="3.30.2350.10:FF:000007">
    <property type="entry name" value="Pseudouridine synthase"/>
    <property type="match status" value="1"/>
</dbReference>
<dbReference type="Gene3D" id="3.30.2350.10">
    <property type="entry name" value="Pseudouridine synthase"/>
    <property type="match status" value="1"/>
</dbReference>
<dbReference type="Gene3D" id="3.10.290.10">
    <property type="entry name" value="RNA-binding S4 domain"/>
    <property type="match status" value="1"/>
</dbReference>
<dbReference type="InterPro" id="IPR020103">
    <property type="entry name" value="PsdUridine_synth_cat_dom_sf"/>
</dbReference>
<dbReference type="InterPro" id="IPR006224">
    <property type="entry name" value="PsdUridine_synth_RluA-like_CS"/>
</dbReference>
<dbReference type="InterPro" id="IPR006225">
    <property type="entry name" value="PsdUridine_synth_RluC/D"/>
</dbReference>
<dbReference type="InterPro" id="IPR006145">
    <property type="entry name" value="PsdUridine_synth_RsuA/RluA"/>
</dbReference>
<dbReference type="InterPro" id="IPR050188">
    <property type="entry name" value="RluA_PseudoU_synthase"/>
</dbReference>
<dbReference type="InterPro" id="IPR002942">
    <property type="entry name" value="S4_RNA-bd"/>
</dbReference>
<dbReference type="InterPro" id="IPR036986">
    <property type="entry name" value="S4_RNA-bd_sf"/>
</dbReference>
<dbReference type="NCBIfam" id="NF008249">
    <property type="entry name" value="PRK11025.1"/>
    <property type="match status" value="1"/>
</dbReference>
<dbReference type="NCBIfam" id="TIGR00005">
    <property type="entry name" value="rluA_subfam"/>
    <property type="match status" value="1"/>
</dbReference>
<dbReference type="PANTHER" id="PTHR21600">
    <property type="entry name" value="MITOCHONDRIAL RNA PSEUDOURIDINE SYNTHASE"/>
    <property type="match status" value="1"/>
</dbReference>
<dbReference type="PANTHER" id="PTHR21600:SF92">
    <property type="entry name" value="RIBOSOMAL LARGE SUBUNIT PSEUDOURIDINE SYNTHASE C"/>
    <property type="match status" value="1"/>
</dbReference>
<dbReference type="Pfam" id="PF00849">
    <property type="entry name" value="PseudoU_synth_2"/>
    <property type="match status" value="1"/>
</dbReference>
<dbReference type="Pfam" id="PF01479">
    <property type="entry name" value="S4"/>
    <property type="match status" value="1"/>
</dbReference>
<dbReference type="SMART" id="SM00363">
    <property type="entry name" value="S4"/>
    <property type="match status" value="1"/>
</dbReference>
<dbReference type="SUPFAM" id="SSF55174">
    <property type="entry name" value="Alpha-L RNA-binding motif"/>
    <property type="match status" value="1"/>
</dbReference>
<dbReference type="SUPFAM" id="SSF55120">
    <property type="entry name" value="Pseudouridine synthase"/>
    <property type="match status" value="1"/>
</dbReference>
<dbReference type="PROSITE" id="PS01129">
    <property type="entry name" value="PSI_RLU"/>
    <property type="match status" value="1"/>
</dbReference>
<dbReference type="PROSITE" id="PS50889">
    <property type="entry name" value="S4"/>
    <property type="match status" value="1"/>
</dbReference>
<organism>
    <name type="scientific">Escherichia coli O157:H7</name>
    <dbReference type="NCBI Taxonomy" id="83334"/>
    <lineage>
        <taxon>Bacteria</taxon>
        <taxon>Pseudomonadati</taxon>
        <taxon>Pseudomonadota</taxon>
        <taxon>Gammaproteobacteria</taxon>
        <taxon>Enterobacterales</taxon>
        <taxon>Enterobacteriaceae</taxon>
        <taxon>Escherichia</taxon>
    </lineage>
</organism>
<reference key="1">
    <citation type="journal article" date="2001" name="Nature">
        <title>Genome sequence of enterohaemorrhagic Escherichia coli O157:H7.</title>
        <authorList>
            <person name="Perna N.T."/>
            <person name="Plunkett G. III"/>
            <person name="Burland V."/>
            <person name="Mau B."/>
            <person name="Glasner J.D."/>
            <person name="Rose D.J."/>
            <person name="Mayhew G.F."/>
            <person name="Evans P.S."/>
            <person name="Gregor J."/>
            <person name="Kirkpatrick H.A."/>
            <person name="Posfai G."/>
            <person name="Hackett J."/>
            <person name="Klink S."/>
            <person name="Boutin A."/>
            <person name="Shao Y."/>
            <person name="Miller L."/>
            <person name="Grotbeck E.J."/>
            <person name="Davis N.W."/>
            <person name="Lim A."/>
            <person name="Dimalanta E.T."/>
            <person name="Potamousis K."/>
            <person name="Apodaca J."/>
            <person name="Anantharaman T.S."/>
            <person name="Lin J."/>
            <person name="Yen G."/>
            <person name="Schwartz D.C."/>
            <person name="Welch R.A."/>
            <person name="Blattner F.R."/>
        </authorList>
    </citation>
    <scope>NUCLEOTIDE SEQUENCE [LARGE SCALE GENOMIC DNA]</scope>
    <source>
        <strain>O157:H7 / EDL933 / ATCC 700927 / EHEC</strain>
    </source>
</reference>
<reference key="2">
    <citation type="journal article" date="2001" name="DNA Res.">
        <title>Complete genome sequence of enterohemorrhagic Escherichia coli O157:H7 and genomic comparison with a laboratory strain K-12.</title>
        <authorList>
            <person name="Hayashi T."/>
            <person name="Makino K."/>
            <person name="Ohnishi M."/>
            <person name="Kurokawa K."/>
            <person name="Ishii K."/>
            <person name="Yokoyama K."/>
            <person name="Han C.-G."/>
            <person name="Ohtsubo E."/>
            <person name="Nakayama K."/>
            <person name="Murata T."/>
            <person name="Tanaka M."/>
            <person name="Tobe T."/>
            <person name="Iida T."/>
            <person name="Takami H."/>
            <person name="Honda T."/>
            <person name="Sasakawa C."/>
            <person name="Ogasawara N."/>
            <person name="Yasunaga T."/>
            <person name="Kuhara S."/>
            <person name="Shiba T."/>
            <person name="Hattori M."/>
            <person name="Shinagawa H."/>
        </authorList>
    </citation>
    <scope>NUCLEOTIDE SEQUENCE [LARGE SCALE GENOMIC DNA]</scope>
    <source>
        <strain>O157:H7 / Sakai / RIMD 0509952 / EHEC</strain>
    </source>
</reference>
<feature type="chain" id="PRO_0000162669" description="Ribosomal large subunit pseudouridine synthase C">
    <location>
        <begin position="1"/>
        <end position="319"/>
    </location>
</feature>
<feature type="domain" description="S4 RNA-binding" evidence="2">
    <location>
        <begin position="20"/>
        <end position="83"/>
    </location>
</feature>
<feature type="active site" evidence="1">
    <location>
        <position position="144"/>
    </location>
</feature>
<accession>Q8X8J3</accession>
<proteinExistence type="inferred from homology"/>
<protein>
    <recommendedName>
        <fullName>Ribosomal large subunit pseudouridine synthase C</fullName>
        <ecNumber>5.4.99.24</ecNumber>
    </recommendedName>
    <alternativeName>
        <fullName>23S rRNA pseudouridine(955/2504/2580) synthase</fullName>
    </alternativeName>
    <alternativeName>
        <fullName>rRNA pseudouridylate synthase C</fullName>
    </alternativeName>
    <alternativeName>
        <fullName>rRNA-uridine isomerase C</fullName>
    </alternativeName>
</protein>
<sequence length="319" mass="36013">MKTETPSVKIVAITADEAGQRIDNFLRTQLKGVPKSMIYRILRKGEVRVNKKRIKPEYKLEAGDEVRIPPVRVAEREEEAVSPHLQKVAALADVILYEDDHILVLNKPSGTAVHGGSGLSFGVIEGLRALRPEARFLELVHRLDRDTSGVLLVAKKRSALRSLHEQLREKGMQKDYLALVRGQWQSHVKSVQAPLLKNILQSGERIVRVSQEGKPSETRFKVEERYAFATLVRCSPVTGRTHQIRVHTQYAGHPIAFDDRYGDREFDRQLTEAGTGLNRLFLHAAALKFTHPGTGEVMRIEAPMDDGLKRCLQKLRNAR</sequence>
<gene>
    <name type="primary">rluC</name>
    <name type="ordered locus">Z1725</name>
    <name type="ordered locus">ECs1464</name>
</gene>
<keyword id="KW-0413">Isomerase</keyword>
<keyword id="KW-1185">Reference proteome</keyword>
<keyword id="KW-0694">RNA-binding</keyword>
<keyword id="KW-0698">rRNA processing</keyword>
<comment type="function">
    <text evidence="1">Responsible for synthesis of pseudouridine from uracil at positions 955, 2504 and 2580 in 23S ribosomal RNA.</text>
</comment>
<comment type="catalytic activity">
    <reaction>
        <text>uridine(955/2504/2580) in 23S rRNA = pseudouridine(955/2504/2580) in 23S rRNA</text>
        <dbReference type="Rhea" id="RHEA:42528"/>
        <dbReference type="Rhea" id="RHEA-COMP:10099"/>
        <dbReference type="Rhea" id="RHEA-COMP:10100"/>
        <dbReference type="ChEBI" id="CHEBI:65314"/>
        <dbReference type="ChEBI" id="CHEBI:65315"/>
        <dbReference type="EC" id="5.4.99.24"/>
    </reaction>
</comment>
<comment type="similarity">
    <text evidence="3">Belongs to the pseudouridine synthase RluA family.</text>
</comment>
<evidence type="ECO:0000250" key="1"/>
<evidence type="ECO:0000255" key="2">
    <source>
        <dbReference type="PROSITE-ProRule" id="PRU00182"/>
    </source>
</evidence>
<evidence type="ECO:0000305" key="3"/>